<reference key="1">
    <citation type="journal article" date="2008" name="PLoS Genet.">
        <title>Complete genome sequence of the N2-fixing broad host range endophyte Klebsiella pneumoniae 342 and virulence predictions verified in mice.</title>
        <authorList>
            <person name="Fouts D.E."/>
            <person name="Tyler H.L."/>
            <person name="DeBoy R.T."/>
            <person name="Daugherty S."/>
            <person name="Ren Q."/>
            <person name="Badger J.H."/>
            <person name="Durkin A.S."/>
            <person name="Huot H."/>
            <person name="Shrivastava S."/>
            <person name="Kothari S."/>
            <person name="Dodson R.J."/>
            <person name="Mohamoud Y."/>
            <person name="Khouri H."/>
            <person name="Roesch L.F.W."/>
            <person name="Krogfelt K.A."/>
            <person name="Struve C."/>
            <person name="Triplett E.W."/>
            <person name="Methe B.A."/>
        </authorList>
    </citation>
    <scope>NUCLEOTIDE SEQUENCE [LARGE SCALE GENOMIC DNA]</scope>
    <source>
        <strain>342</strain>
    </source>
</reference>
<sequence>MADWNPSLYLQFDAERTRPAADLLSRIAHLQVEHVVDLGCGPGNSTRLLRAAWPLAAITGIDNSPAMLAQAAQALPDCEFIDADIARWRPAQPVDVIYANASLQWLADHETLFPHLVAQLAVNGTLAVQMPDNWQEPSHTLMRQVADEQGLPDRGRQPLLPPDAWYDMLTRQGCEVDIWRTTYFHPLASHQAISDWLQGTGLRPYLAGLDEQSRNAFLTRYVELLAEHYPLQCNGKVLLRFPRLFIVARKIDV</sequence>
<gene>
    <name evidence="1" type="primary">tam</name>
    <name type="ordered locus">KPK_2732</name>
</gene>
<evidence type="ECO:0000255" key="1">
    <source>
        <dbReference type="HAMAP-Rule" id="MF_00560"/>
    </source>
</evidence>
<organism>
    <name type="scientific">Klebsiella pneumoniae (strain 342)</name>
    <dbReference type="NCBI Taxonomy" id="507522"/>
    <lineage>
        <taxon>Bacteria</taxon>
        <taxon>Pseudomonadati</taxon>
        <taxon>Pseudomonadota</taxon>
        <taxon>Gammaproteobacteria</taxon>
        <taxon>Enterobacterales</taxon>
        <taxon>Enterobacteriaceae</taxon>
        <taxon>Klebsiella/Raoultella group</taxon>
        <taxon>Klebsiella</taxon>
        <taxon>Klebsiella pneumoniae complex</taxon>
    </lineage>
</organism>
<feature type="chain" id="PRO_1000129259" description="Trans-aconitate 2-methyltransferase">
    <location>
        <begin position="1"/>
        <end position="253"/>
    </location>
</feature>
<keyword id="KW-0963">Cytoplasm</keyword>
<keyword id="KW-0489">Methyltransferase</keyword>
<keyword id="KW-0949">S-adenosyl-L-methionine</keyword>
<keyword id="KW-0808">Transferase</keyword>
<name>TAM_KLEP3</name>
<dbReference type="EC" id="2.1.1.144" evidence="1"/>
<dbReference type="EMBL" id="CP000964">
    <property type="protein sequence ID" value="ACI08529.1"/>
    <property type="molecule type" value="Genomic_DNA"/>
</dbReference>
<dbReference type="SMR" id="B5XQT8"/>
<dbReference type="KEGG" id="kpe:KPK_2732"/>
<dbReference type="HOGENOM" id="CLU_037990_5_2_6"/>
<dbReference type="Proteomes" id="UP000001734">
    <property type="component" value="Chromosome"/>
</dbReference>
<dbReference type="GO" id="GO:0005737">
    <property type="term" value="C:cytoplasm"/>
    <property type="evidence" value="ECO:0007669"/>
    <property type="project" value="UniProtKB-SubCell"/>
</dbReference>
<dbReference type="GO" id="GO:0030798">
    <property type="term" value="F:trans-aconitate 2-methyltransferase activity"/>
    <property type="evidence" value="ECO:0007669"/>
    <property type="project" value="UniProtKB-UniRule"/>
</dbReference>
<dbReference type="GO" id="GO:0032259">
    <property type="term" value="P:methylation"/>
    <property type="evidence" value="ECO:0007669"/>
    <property type="project" value="UniProtKB-KW"/>
</dbReference>
<dbReference type="CDD" id="cd02440">
    <property type="entry name" value="AdoMet_MTases"/>
    <property type="match status" value="1"/>
</dbReference>
<dbReference type="Gene3D" id="1.10.150.290">
    <property type="entry name" value="S-adenosyl-L-methionine-dependent methyltransferases"/>
    <property type="match status" value="1"/>
</dbReference>
<dbReference type="Gene3D" id="3.40.50.150">
    <property type="entry name" value="Vaccinia Virus protein VP39"/>
    <property type="match status" value="1"/>
</dbReference>
<dbReference type="HAMAP" id="MF_00560">
    <property type="entry name" value="Tran_acon_Me_trans"/>
    <property type="match status" value="1"/>
</dbReference>
<dbReference type="InterPro" id="IPR029063">
    <property type="entry name" value="SAM-dependent_MTases_sf"/>
</dbReference>
<dbReference type="InterPro" id="IPR023506">
    <property type="entry name" value="Trans-aconitate_MeTrfase"/>
</dbReference>
<dbReference type="InterPro" id="IPR023149">
    <property type="entry name" value="Trans_acon_MeTrfase_C"/>
</dbReference>
<dbReference type="NCBIfam" id="NF002463">
    <property type="entry name" value="PRK01683.1"/>
    <property type="match status" value="1"/>
</dbReference>
<dbReference type="PANTHER" id="PTHR43861:SF1">
    <property type="entry name" value="TRANS-ACONITATE 2-METHYLTRANSFERASE"/>
    <property type="match status" value="1"/>
</dbReference>
<dbReference type="PANTHER" id="PTHR43861">
    <property type="entry name" value="TRANS-ACONITATE 2-METHYLTRANSFERASE-RELATED"/>
    <property type="match status" value="1"/>
</dbReference>
<dbReference type="Pfam" id="PF13489">
    <property type="entry name" value="Methyltransf_23"/>
    <property type="match status" value="1"/>
</dbReference>
<dbReference type="SUPFAM" id="SSF53335">
    <property type="entry name" value="S-adenosyl-L-methionine-dependent methyltransferases"/>
    <property type="match status" value="1"/>
</dbReference>
<comment type="function">
    <text evidence="1">Catalyzes the S-adenosylmethionine monomethyl esterification of trans-aconitate.</text>
</comment>
<comment type="catalytic activity">
    <reaction evidence="1">
        <text>trans-aconitate + S-adenosyl-L-methionine = (E)-3-(methoxycarbonyl)pent-2-enedioate + S-adenosyl-L-homocysteine</text>
        <dbReference type="Rhea" id="RHEA:14969"/>
        <dbReference type="ChEBI" id="CHEBI:15708"/>
        <dbReference type="ChEBI" id="CHEBI:57470"/>
        <dbReference type="ChEBI" id="CHEBI:57856"/>
        <dbReference type="ChEBI" id="CHEBI:59789"/>
        <dbReference type="EC" id="2.1.1.144"/>
    </reaction>
</comment>
<comment type="subcellular location">
    <subcellularLocation>
        <location evidence="1">Cytoplasm</location>
    </subcellularLocation>
</comment>
<comment type="similarity">
    <text evidence="1">Belongs to the methyltransferase superfamily. Tam family.</text>
</comment>
<proteinExistence type="inferred from homology"/>
<accession>B5XQT8</accession>
<protein>
    <recommendedName>
        <fullName evidence="1">Trans-aconitate 2-methyltransferase</fullName>
        <ecNumber evidence="1">2.1.1.144</ecNumber>
    </recommendedName>
</protein>